<keyword id="KW-1003">Cell membrane</keyword>
<keyword id="KW-0407">Ion channel</keyword>
<keyword id="KW-0406">Ion transport</keyword>
<keyword id="KW-0472">Membrane</keyword>
<keyword id="KW-1185">Reference proteome</keyword>
<keyword id="KW-0812">Transmembrane</keyword>
<keyword id="KW-1133">Transmembrane helix</keyword>
<keyword id="KW-0813">Transport</keyword>
<sequence>MLEEFKKFALKGNVLDLAVGVIIGGAFGKIVTSLVNDIIMPILGLVVGGINFTALEYVLTEKGSEPIVLRYGQFIQTTFDFLIIAFSIFMFIKVLTKFKKKEEEKPASAPKPSKEEMLLSEIRDILKEKAN</sequence>
<accession>A8MGZ0</accession>
<feature type="chain" id="PRO_1000057752" description="Large-conductance mechanosensitive channel">
    <location>
        <begin position="1"/>
        <end position="131"/>
    </location>
</feature>
<feature type="transmembrane region" description="Helical" evidence="1">
    <location>
        <begin position="8"/>
        <end position="28"/>
    </location>
</feature>
<feature type="transmembrane region" description="Helical" evidence="1">
    <location>
        <begin position="30"/>
        <end position="50"/>
    </location>
</feature>
<feature type="transmembrane region" description="Helical" evidence="1">
    <location>
        <begin position="72"/>
        <end position="92"/>
    </location>
</feature>
<gene>
    <name evidence="1" type="primary">mscL</name>
    <name type="ordered locus">Clos_1332</name>
</gene>
<name>MSCL_ALKOO</name>
<dbReference type="EMBL" id="CP000853">
    <property type="protein sequence ID" value="ABW18877.1"/>
    <property type="molecule type" value="Genomic_DNA"/>
</dbReference>
<dbReference type="RefSeq" id="WP_012159189.1">
    <property type="nucleotide sequence ID" value="NC_009922.1"/>
</dbReference>
<dbReference type="SMR" id="A8MGZ0"/>
<dbReference type="STRING" id="350688.Clos_1332"/>
<dbReference type="KEGG" id="aoe:Clos_1332"/>
<dbReference type="eggNOG" id="COG1970">
    <property type="taxonomic scope" value="Bacteria"/>
</dbReference>
<dbReference type="HOGENOM" id="CLU_095787_0_0_9"/>
<dbReference type="OrthoDB" id="9810350at2"/>
<dbReference type="Proteomes" id="UP000000269">
    <property type="component" value="Chromosome"/>
</dbReference>
<dbReference type="GO" id="GO:0005886">
    <property type="term" value="C:plasma membrane"/>
    <property type="evidence" value="ECO:0007669"/>
    <property type="project" value="UniProtKB-SubCell"/>
</dbReference>
<dbReference type="GO" id="GO:0008381">
    <property type="term" value="F:mechanosensitive monoatomic ion channel activity"/>
    <property type="evidence" value="ECO:0007669"/>
    <property type="project" value="UniProtKB-UniRule"/>
</dbReference>
<dbReference type="FunFam" id="1.10.1200.120:FF:000001">
    <property type="entry name" value="Large-conductance mechanosensitive channel"/>
    <property type="match status" value="1"/>
</dbReference>
<dbReference type="Gene3D" id="1.10.1200.120">
    <property type="entry name" value="Large-conductance mechanosensitive channel, MscL, domain 1"/>
    <property type="match status" value="1"/>
</dbReference>
<dbReference type="HAMAP" id="MF_00115">
    <property type="entry name" value="MscL"/>
    <property type="match status" value="1"/>
</dbReference>
<dbReference type="InterPro" id="IPR019823">
    <property type="entry name" value="Mechanosensitive_channel_CS"/>
</dbReference>
<dbReference type="InterPro" id="IPR001185">
    <property type="entry name" value="MS_channel"/>
</dbReference>
<dbReference type="InterPro" id="IPR037673">
    <property type="entry name" value="MSC/AndL"/>
</dbReference>
<dbReference type="InterPro" id="IPR036019">
    <property type="entry name" value="MscL_channel"/>
</dbReference>
<dbReference type="NCBIfam" id="TIGR00220">
    <property type="entry name" value="mscL"/>
    <property type="match status" value="1"/>
</dbReference>
<dbReference type="NCBIfam" id="NF001843">
    <property type="entry name" value="PRK00567.1-4"/>
    <property type="match status" value="1"/>
</dbReference>
<dbReference type="PANTHER" id="PTHR30266:SF2">
    <property type="entry name" value="LARGE-CONDUCTANCE MECHANOSENSITIVE CHANNEL"/>
    <property type="match status" value="1"/>
</dbReference>
<dbReference type="PANTHER" id="PTHR30266">
    <property type="entry name" value="MECHANOSENSITIVE CHANNEL MSCL"/>
    <property type="match status" value="1"/>
</dbReference>
<dbReference type="Pfam" id="PF01741">
    <property type="entry name" value="MscL"/>
    <property type="match status" value="1"/>
</dbReference>
<dbReference type="PRINTS" id="PR01264">
    <property type="entry name" value="MECHCHANNEL"/>
</dbReference>
<dbReference type="SUPFAM" id="SSF81330">
    <property type="entry name" value="Gated mechanosensitive channel"/>
    <property type="match status" value="1"/>
</dbReference>
<dbReference type="PROSITE" id="PS01327">
    <property type="entry name" value="MSCL"/>
    <property type="match status" value="1"/>
</dbReference>
<protein>
    <recommendedName>
        <fullName evidence="1">Large-conductance mechanosensitive channel</fullName>
    </recommendedName>
</protein>
<evidence type="ECO:0000255" key="1">
    <source>
        <dbReference type="HAMAP-Rule" id="MF_00115"/>
    </source>
</evidence>
<organism>
    <name type="scientific">Alkaliphilus oremlandii (strain OhILAs)</name>
    <name type="common">Clostridium oremlandii (strain OhILAs)</name>
    <dbReference type="NCBI Taxonomy" id="350688"/>
    <lineage>
        <taxon>Bacteria</taxon>
        <taxon>Bacillati</taxon>
        <taxon>Bacillota</taxon>
        <taxon>Clostridia</taxon>
        <taxon>Peptostreptococcales</taxon>
        <taxon>Natronincolaceae</taxon>
        <taxon>Alkaliphilus</taxon>
    </lineage>
</organism>
<comment type="function">
    <text evidence="1">Channel that opens in response to stretch forces in the membrane lipid bilayer. May participate in the regulation of osmotic pressure changes within the cell.</text>
</comment>
<comment type="subunit">
    <text evidence="1">Homopentamer.</text>
</comment>
<comment type="subcellular location">
    <subcellularLocation>
        <location evidence="1">Cell membrane</location>
        <topology evidence="1">Multi-pass membrane protein</topology>
    </subcellularLocation>
</comment>
<comment type="similarity">
    <text evidence="1">Belongs to the MscL family.</text>
</comment>
<proteinExistence type="inferred from homology"/>
<reference key="1">
    <citation type="submission" date="2007-10" db="EMBL/GenBank/DDBJ databases">
        <title>Complete genome of Alkaliphilus oremlandii OhILAs.</title>
        <authorList>
            <person name="Copeland A."/>
            <person name="Lucas S."/>
            <person name="Lapidus A."/>
            <person name="Barry K."/>
            <person name="Detter J.C."/>
            <person name="Glavina del Rio T."/>
            <person name="Hammon N."/>
            <person name="Israni S."/>
            <person name="Dalin E."/>
            <person name="Tice H."/>
            <person name="Pitluck S."/>
            <person name="Chain P."/>
            <person name="Malfatti S."/>
            <person name="Shin M."/>
            <person name="Vergez L."/>
            <person name="Schmutz J."/>
            <person name="Larimer F."/>
            <person name="Land M."/>
            <person name="Hauser L."/>
            <person name="Kyrpides N."/>
            <person name="Mikhailova N."/>
            <person name="Stolz J.F."/>
            <person name="Dawson A."/>
            <person name="Fisher E."/>
            <person name="Crable B."/>
            <person name="Perera E."/>
            <person name="Lisak J."/>
            <person name="Ranganathan M."/>
            <person name="Basu P."/>
            <person name="Richardson P."/>
        </authorList>
    </citation>
    <scope>NUCLEOTIDE SEQUENCE [LARGE SCALE GENOMIC DNA]</scope>
    <source>
        <strain>OhILAs</strain>
    </source>
</reference>